<proteinExistence type="evidence at transcript level"/>
<name>ODP2_PSEAE</name>
<gene>
    <name type="primary">aceF</name>
    <name evidence="7" type="synonym">aceB</name>
    <name type="ordered locus">PA5016</name>
</gene>
<feature type="chain" id="PRO_0000162283" description="Dihydrolipoyllysine-residue acetyltransferase component of pyruvate dehydrogenase complex">
    <location>
        <begin position="1"/>
        <end position="547"/>
    </location>
</feature>
<feature type="domain" description="Lipoyl-binding 1" evidence="3">
    <location>
        <begin position="2"/>
        <end position="75"/>
    </location>
</feature>
<feature type="domain" description="Lipoyl-binding 2" evidence="3">
    <location>
        <begin position="119"/>
        <end position="193"/>
    </location>
</feature>
<feature type="domain" description="Peripheral subunit-binding (PSBD)" evidence="4">
    <location>
        <begin position="248"/>
        <end position="285"/>
    </location>
</feature>
<feature type="region of interest" description="Disordered" evidence="5">
    <location>
        <begin position="75"/>
        <end position="117"/>
    </location>
</feature>
<feature type="region of interest" description="Disordered" evidence="5">
    <location>
        <begin position="202"/>
        <end position="248"/>
    </location>
</feature>
<feature type="compositionally biased region" description="Low complexity" evidence="5">
    <location>
        <begin position="80"/>
        <end position="117"/>
    </location>
</feature>
<feature type="compositionally biased region" description="Low complexity" evidence="5">
    <location>
        <begin position="202"/>
        <end position="231"/>
    </location>
</feature>
<feature type="active site" evidence="2">
    <location>
        <position position="520"/>
    </location>
</feature>
<feature type="modified residue" description="N6-lipoyllysine" evidence="1 3">
    <location>
        <position position="41"/>
    </location>
</feature>
<feature type="modified residue" description="N6-lipoyllysine" evidence="1 3">
    <location>
        <position position="159"/>
    </location>
</feature>
<feature type="sequence conflict" description="In Ref. 1; AAC45354." evidence="8" ref="1">
    <original>A</original>
    <variation>V</variation>
    <location>
        <position position="225"/>
    </location>
</feature>
<feature type="sequence conflict" description="In Ref. 1; AAC45354." evidence="8" ref="1">
    <original>GGAGATG</original>
    <variation>AVPAPR</variation>
    <location>
        <begin position="295"/>
        <end position="301"/>
    </location>
</feature>
<feature type="sequence conflict" description="In Ref. 1; AAC45354." evidence="8" ref="1">
    <original>MQ</original>
    <variation>IE</variation>
    <location>
        <begin position="328"/>
        <end position="329"/>
    </location>
</feature>
<evidence type="ECO:0000250" key="1"/>
<evidence type="ECO:0000255" key="2"/>
<evidence type="ECO:0000255" key="3">
    <source>
        <dbReference type="PROSITE-ProRule" id="PRU01066"/>
    </source>
</evidence>
<evidence type="ECO:0000255" key="4">
    <source>
        <dbReference type="PROSITE-ProRule" id="PRU01170"/>
    </source>
</evidence>
<evidence type="ECO:0000256" key="5">
    <source>
        <dbReference type="SAM" id="MobiDB-lite"/>
    </source>
</evidence>
<evidence type="ECO:0000269" key="6">
    <source>
    </source>
</evidence>
<evidence type="ECO:0000303" key="7">
    <source>
    </source>
</evidence>
<evidence type="ECO:0000305" key="8"/>
<organism>
    <name type="scientific">Pseudomonas aeruginosa (strain ATCC 15692 / DSM 22644 / CIP 104116 / JCM 14847 / LMG 12228 / 1C / PRS 101 / PAO1)</name>
    <dbReference type="NCBI Taxonomy" id="208964"/>
    <lineage>
        <taxon>Bacteria</taxon>
        <taxon>Pseudomonadati</taxon>
        <taxon>Pseudomonadota</taxon>
        <taxon>Gammaproteobacteria</taxon>
        <taxon>Pseudomonadales</taxon>
        <taxon>Pseudomonadaceae</taxon>
        <taxon>Pseudomonas</taxon>
    </lineage>
</organism>
<protein>
    <recommendedName>
        <fullName>Dihydrolipoyllysine-residue acetyltransferase component of pyruvate dehydrogenase complex</fullName>
        <ecNumber>2.3.1.12</ecNumber>
    </recommendedName>
    <alternativeName>
        <fullName>Dihydrolipoamide acetyltransferase component of pyruvate dehydrogenase complex</fullName>
    </alternativeName>
    <alternativeName>
        <fullName>E2</fullName>
    </alternativeName>
</protein>
<reference key="1">
    <citation type="journal article" date="1997" name="J. Bacteriol.">
        <title>Sequences and expression of pyruvate dehydrogenase genes from Pseudomonas aeruginosa.</title>
        <authorList>
            <person name="Rae J.L."/>
            <person name="Cutfield J.F."/>
            <person name="Lamont I.L."/>
        </authorList>
    </citation>
    <scope>NUCLEOTIDE SEQUENCE [GENOMIC DNA]</scope>
    <scope>INDUCTION</scope>
    <scope>DISRUPTION PHENOTYPE</scope>
    <source>
        <strain>PAO</strain>
    </source>
</reference>
<reference key="2">
    <citation type="journal article" date="2000" name="Nature">
        <title>Complete genome sequence of Pseudomonas aeruginosa PAO1, an opportunistic pathogen.</title>
        <authorList>
            <person name="Stover C.K."/>
            <person name="Pham X.-Q.T."/>
            <person name="Erwin A.L."/>
            <person name="Mizoguchi S.D."/>
            <person name="Warrener P."/>
            <person name="Hickey M.J."/>
            <person name="Brinkman F.S.L."/>
            <person name="Hufnagle W.O."/>
            <person name="Kowalik D.J."/>
            <person name="Lagrou M."/>
            <person name="Garber R.L."/>
            <person name="Goltry L."/>
            <person name="Tolentino E."/>
            <person name="Westbrock-Wadman S."/>
            <person name="Yuan Y."/>
            <person name="Brody L.L."/>
            <person name="Coulter S.N."/>
            <person name="Folger K.R."/>
            <person name="Kas A."/>
            <person name="Larbig K."/>
            <person name="Lim R.M."/>
            <person name="Smith K.A."/>
            <person name="Spencer D.H."/>
            <person name="Wong G.K.-S."/>
            <person name="Wu Z."/>
            <person name="Paulsen I.T."/>
            <person name="Reizer J."/>
            <person name="Saier M.H. Jr."/>
            <person name="Hancock R.E.W."/>
            <person name="Lory S."/>
            <person name="Olson M.V."/>
        </authorList>
    </citation>
    <scope>NUCLEOTIDE SEQUENCE [LARGE SCALE GENOMIC DNA]</scope>
    <source>
        <strain>ATCC 15692 / DSM 22644 / CIP 104116 / JCM 14847 / LMG 12228 / 1C / PRS 101 / PAO1</strain>
    </source>
</reference>
<accession>Q59638</accession>
<keyword id="KW-0012">Acyltransferase</keyword>
<keyword id="KW-0450">Lipoyl</keyword>
<keyword id="KW-1185">Reference proteome</keyword>
<keyword id="KW-0677">Repeat</keyword>
<keyword id="KW-0808">Transferase</keyword>
<dbReference type="EC" id="2.3.1.12"/>
<dbReference type="EMBL" id="U47920">
    <property type="protein sequence ID" value="AAC45354.1"/>
    <property type="molecule type" value="Genomic_DNA"/>
</dbReference>
<dbReference type="EMBL" id="AE004091">
    <property type="protein sequence ID" value="AAG08401.1"/>
    <property type="molecule type" value="Genomic_DNA"/>
</dbReference>
<dbReference type="PIR" id="H83018">
    <property type="entry name" value="H83018"/>
</dbReference>
<dbReference type="RefSeq" id="NP_253703.1">
    <property type="nucleotide sequence ID" value="NC_002516.2"/>
</dbReference>
<dbReference type="RefSeq" id="WP_003115359.1">
    <property type="nucleotide sequence ID" value="NZ_QZGE01000002.1"/>
</dbReference>
<dbReference type="SMR" id="Q59638"/>
<dbReference type="FunCoup" id="Q59638">
    <property type="interactions" value="677"/>
</dbReference>
<dbReference type="STRING" id="208964.PA5016"/>
<dbReference type="PaxDb" id="208964-PA5016"/>
<dbReference type="GeneID" id="881297"/>
<dbReference type="KEGG" id="pae:PA5016"/>
<dbReference type="PATRIC" id="fig|208964.12.peg.5257"/>
<dbReference type="PseudoCAP" id="PA5016"/>
<dbReference type="HOGENOM" id="CLU_016733_10_0_6"/>
<dbReference type="InParanoid" id="Q59638"/>
<dbReference type="OrthoDB" id="9805770at2"/>
<dbReference type="PhylomeDB" id="Q59638"/>
<dbReference type="BioCyc" id="PAER208964:G1FZ6-5132-MONOMER"/>
<dbReference type="PHI-base" id="PHI:12232"/>
<dbReference type="Proteomes" id="UP000002438">
    <property type="component" value="Chromosome"/>
</dbReference>
<dbReference type="GO" id="GO:0005737">
    <property type="term" value="C:cytoplasm"/>
    <property type="evidence" value="ECO:0000318"/>
    <property type="project" value="GO_Central"/>
</dbReference>
<dbReference type="GO" id="GO:0045254">
    <property type="term" value="C:pyruvate dehydrogenase complex"/>
    <property type="evidence" value="ECO:0007669"/>
    <property type="project" value="InterPro"/>
</dbReference>
<dbReference type="GO" id="GO:0016407">
    <property type="term" value="F:acetyltransferase activity"/>
    <property type="evidence" value="ECO:0000318"/>
    <property type="project" value="GO_Central"/>
</dbReference>
<dbReference type="GO" id="GO:0004742">
    <property type="term" value="F:dihydrolipoyllysine-residue acetyltransferase activity"/>
    <property type="evidence" value="ECO:0007669"/>
    <property type="project" value="UniProtKB-EC"/>
</dbReference>
<dbReference type="GO" id="GO:0031405">
    <property type="term" value="F:lipoic acid binding"/>
    <property type="evidence" value="ECO:0000318"/>
    <property type="project" value="GO_Central"/>
</dbReference>
<dbReference type="GO" id="GO:0006086">
    <property type="term" value="P:pyruvate decarboxylation to acetyl-CoA"/>
    <property type="evidence" value="ECO:0000318"/>
    <property type="project" value="GO_Central"/>
</dbReference>
<dbReference type="CDD" id="cd06849">
    <property type="entry name" value="lipoyl_domain"/>
    <property type="match status" value="2"/>
</dbReference>
<dbReference type="FunFam" id="2.40.50.100:FF:000009">
    <property type="entry name" value="Acetyltransferase component of pyruvate dehydrogenase complex"/>
    <property type="match status" value="2"/>
</dbReference>
<dbReference type="FunFam" id="3.30.559.10:FF:000004">
    <property type="entry name" value="Acetyltransferase component of pyruvate dehydrogenase complex"/>
    <property type="match status" value="1"/>
</dbReference>
<dbReference type="FunFam" id="4.10.320.10:FF:000003">
    <property type="entry name" value="Acetyltransferase component of pyruvate dehydrogenase complex"/>
    <property type="match status" value="1"/>
</dbReference>
<dbReference type="Gene3D" id="2.40.50.100">
    <property type="match status" value="2"/>
</dbReference>
<dbReference type="Gene3D" id="3.30.559.10">
    <property type="entry name" value="Chloramphenicol acetyltransferase-like domain"/>
    <property type="match status" value="1"/>
</dbReference>
<dbReference type="Gene3D" id="4.10.320.10">
    <property type="entry name" value="E3-binding domain"/>
    <property type="match status" value="1"/>
</dbReference>
<dbReference type="InterPro" id="IPR003016">
    <property type="entry name" value="2-oxoA_DH_lipoyl-BS"/>
</dbReference>
<dbReference type="InterPro" id="IPR001078">
    <property type="entry name" value="2-oxoacid_DH_actylTfrase"/>
</dbReference>
<dbReference type="InterPro" id="IPR050743">
    <property type="entry name" value="2-oxoacid_DH_E2_comp"/>
</dbReference>
<dbReference type="InterPro" id="IPR006256">
    <property type="entry name" value="AcTrfase_Pyrv_DH_cplx"/>
</dbReference>
<dbReference type="InterPro" id="IPR000089">
    <property type="entry name" value="Biotin_lipoyl"/>
</dbReference>
<dbReference type="InterPro" id="IPR023213">
    <property type="entry name" value="CAT-like_dom_sf"/>
</dbReference>
<dbReference type="InterPro" id="IPR036625">
    <property type="entry name" value="E3-bd_dom_sf"/>
</dbReference>
<dbReference type="InterPro" id="IPR004167">
    <property type="entry name" value="PSBD"/>
</dbReference>
<dbReference type="InterPro" id="IPR011053">
    <property type="entry name" value="Single_hybrid_motif"/>
</dbReference>
<dbReference type="NCBIfam" id="TIGR01348">
    <property type="entry name" value="PDHac_trf_long"/>
    <property type="match status" value="1"/>
</dbReference>
<dbReference type="PANTHER" id="PTHR43178">
    <property type="entry name" value="DIHYDROLIPOAMIDE ACETYLTRANSFERASE COMPONENT OF PYRUVATE DEHYDROGENASE COMPLEX"/>
    <property type="match status" value="1"/>
</dbReference>
<dbReference type="PANTHER" id="PTHR43178:SF2">
    <property type="entry name" value="DIHYDROLIPOYLLYSINE-RESIDUE ACETYLTRANSFERASE COMPONENT OF PYRUVATE DEHYDROGENASE COMPLEX"/>
    <property type="match status" value="1"/>
</dbReference>
<dbReference type="Pfam" id="PF00198">
    <property type="entry name" value="2-oxoacid_dh"/>
    <property type="match status" value="1"/>
</dbReference>
<dbReference type="Pfam" id="PF00364">
    <property type="entry name" value="Biotin_lipoyl"/>
    <property type="match status" value="2"/>
</dbReference>
<dbReference type="Pfam" id="PF02817">
    <property type="entry name" value="E3_binding"/>
    <property type="match status" value="1"/>
</dbReference>
<dbReference type="SUPFAM" id="SSF52777">
    <property type="entry name" value="CoA-dependent acyltransferases"/>
    <property type="match status" value="1"/>
</dbReference>
<dbReference type="SUPFAM" id="SSF47005">
    <property type="entry name" value="Peripheral subunit-binding domain of 2-oxo acid dehydrogenase complex"/>
    <property type="match status" value="1"/>
</dbReference>
<dbReference type="SUPFAM" id="SSF51230">
    <property type="entry name" value="Single hybrid motif"/>
    <property type="match status" value="2"/>
</dbReference>
<dbReference type="PROSITE" id="PS50968">
    <property type="entry name" value="BIOTINYL_LIPOYL"/>
    <property type="match status" value="2"/>
</dbReference>
<dbReference type="PROSITE" id="PS00189">
    <property type="entry name" value="LIPOYL"/>
    <property type="match status" value="2"/>
</dbReference>
<dbReference type="PROSITE" id="PS51826">
    <property type="entry name" value="PSBD"/>
    <property type="match status" value="1"/>
</dbReference>
<sequence>MSELIRVPDIGNGEGEVIELLVKPGDKVEADQSLLTLESDKASMEIPSPKAGVVKSIKAKVGDTLKEGDEILELEVEGGEQPAEAKAEAAPAQPEAPKAEAPAPAPSESKPAAPAAASVQDIKVPDIGSAGKANVIEVMVKAGDTVEADQSLITLESDKASMEIPSPASGVVESVSIKVGDEVGTGDLILKLKVEGAAPAAEEQPAAAPAQAAAPAAEQKPAAAAPAPAKADTPAPVGAPSRDGAKVHAGPAVRMLAREFGVELSEVKASGPKGRILKEDVQVFVKEQLQRAKSGGAGATGGAGIPPIPEVDFSKFGEVEEVAMTRLMQVGAANLHRSWLNVPHVTQFDQSDITDMEAFRVAQKAAAEKAGVKLTVLPILLKACAHLLKELPDFNSSLAPSGKALIRKKYVHIGFAVDTPDGLLVPVIRDVDRKSLLQLAAEAADLADKARNKKLSADAMQGACFTISSLGHIGGTGFTPIVNAPEVAILGVSKATMQPVWDGKAFQPRLMLPLSLSYDHRVINGAAAARFTKRLGELLADIRTLLL</sequence>
<comment type="function">
    <text>The pyruvate dehydrogenase complex catalyzes the overall conversion of pyruvate to acetyl-CoA and CO(2). It contains multiple copies of three enzymatic components: pyruvate dehydrogenase (E1), dihydrolipoamide acetyltransferase (E2) and lipoamide dehydrogenase (E3).</text>
</comment>
<comment type="catalytic activity">
    <reaction>
        <text>N(6)-[(R)-dihydrolipoyl]-L-lysyl-[protein] + acetyl-CoA = N(6)-[(R)-S(8)-acetyldihydrolipoyl]-L-lysyl-[protein] + CoA</text>
        <dbReference type="Rhea" id="RHEA:17017"/>
        <dbReference type="Rhea" id="RHEA-COMP:10475"/>
        <dbReference type="Rhea" id="RHEA-COMP:10478"/>
        <dbReference type="ChEBI" id="CHEBI:57287"/>
        <dbReference type="ChEBI" id="CHEBI:57288"/>
        <dbReference type="ChEBI" id="CHEBI:83100"/>
        <dbReference type="ChEBI" id="CHEBI:83111"/>
        <dbReference type="EC" id="2.3.1.12"/>
    </reaction>
</comment>
<comment type="cofactor">
    <cofactor evidence="1">
        <name>(R)-lipoate</name>
        <dbReference type="ChEBI" id="CHEBI:83088"/>
    </cofactor>
    <text evidence="1">Binds 2 lipoyl cofactors covalently.</text>
</comment>
<comment type="subunit">
    <text>Forms a 24-polypeptide structural core with octahedral symmetry.</text>
</comment>
<comment type="induction">
    <text evidence="6">Induced by glucose.</text>
</comment>
<comment type="disruption phenotype">
    <text evidence="6">Disruption inactivates the pyruvate dehydrogenase complex and causes an increase in pyruvate concentration and acidity of the culture medium.</text>
</comment>
<comment type="similarity">
    <text evidence="8">Belongs to the 2-oxoacid dehydrogenase family.</text>
</comment>